<gene>
    <name evidence="1" type="primary">fdhD</name>
    <name type="ordered locus">SeSA_A4252</name>
</gene>
<proteinExistence type="inferred from homology"/>
<accession>B4TPP9</accession>
<reference key="1">
    <citation type="journal article" date="2011" name="J. Bacteriol.">
        <title>Comparative genomics of 28 Salmonella enterica isolates: evidence for CRISPR-mediated adaptive sublineage evolution.</title>
        <authorList>
            <person name="Fricke W.F."/>
            <person name="Mammel M.K."/>
            <person name="McDermott P.F."/>
            <person name="Tartera C."/>
            <person name="White D.G."/>
            <person name="Leclerc J.E."/>
            <person name="Ravel J."/>
            <person name="Cebula T.A."/>
        </authorList>
    </citation>
    <scope>NUCLEOTIDE SEQUENCE [LARGE SCALE GENOMIC DNA]</scope>
    <source>
        <strain>CVM19633</strain>
    </source>
</reference>
<evidence type="ECO:0000255" key="1">
    <source>
        <dbReference type="HAMAP-Rule" id="MF_00187"/>
    </source>
</evidence>
<feature type="chain" id="PRO_1000098793" description="Sulfur carrier protein FdhD">
    <location>
        <begin position="1"/>
        <end position="278"/>
    </location>
</feature>
<feature type="active site" description="Cysteine persulfide intermediate" evidence="1">
    <location>
        <position position="121"/>
    </location>
</feature>
<feature type="binding site" evidence="1">
    <location>
        <begin position="260"/>
        <end position="265"/>
    </location>
    <ligand>
        <name>Mo-bis(molybdopterin guanine dinucleotide)</name>
        <dbReference type="ChEBI" id="CHEBI:60539"/>
    </ligand>
</feature>
<organism>
    <name type="scientific">Salmonella schwarzengrund (strain CVM19633)</name>
    <dbReference type="NCBI Taxonomy" id="439843"/>
    <lineage>
        <taxon>Bacteria</taxon>
        <taxon>Pseudomonadati</taxon>
        <taxon>Pseudomonadota</taxon>
        <taxon>Gammaproteobacteria</taxon>
        <taxon>Enterobacterales</taxon>
        <taxon>Enterobacteriaceae</taxon>
        <taxon>Salmonella</taxon>
    </lineage>
</organism>
<sequence>MNNILSEEVLNVTDFTTSRQLALWKREDLQSPQLDDVAEEVPVALVYNGISHVVMMASPKDLTHFAMGFSLSEGIIDSPREIYGMDVVPSCNGLEVQIDLSSRRFMGLKARRRALAGRTGCGVCGVEQLNDIGKPVQPLPFSQTFNLGNLDRALKHLNDFQPTGKLTGCTHAAAWVMPSGELAGGHEDVGRHVALDKLLGRRATEGEEWRQGAALVSSRASYEMVQKSAMCGVEILFAVSAATTLAVDVAERCNLTLVGFCKPGRATIYTHPQRLIAD</sequence>
<name>FDHD_SALSV</name>
<dbReference type="EMBL" id="CP001127">
    <property type="protein sequence ID" value="ACF92413.1"/>
    <property type="molecule type" value="Genomic_DNA"/>
</dbReference>
<dbReference type="RefSeq" id="WP_001059735.1">
    <property type="nucleotide sequence ID" value="NC_011094.1"/>
</dbReference>
<dbReference type="SMR" id="B4TPP9"/>
<dbReference type="KEGG" id="sew:SeSA_A4252"/>
<dbReference type="HOGENOM" id="CLU_056887_2_0_6"/>
<dbReference type="Proteomes" id="UP000001865">
    <property type="component" value="Chromosome"/>
</dbReference>
<dbReference type="GO" id="GO:0005737">
    <property type="term" value="C:cytoplasm"/>
    <property type="evidence" value="ECO:0007669"/>
    <property type="project" value="UniProtKB-SubCell"/>
</dbReference>
<dbReference type="GO" id="GO:0097163">
    <property type="term" value="F:sulfur carrier activity"/>
    <property type="evidence" value="ECO:0007669"/>
    <property type="project" value="UniProtKB-UniRule"/>
</dbReference>
<dbReference type="GO" id="GO:0016783">
    <property type="term" value="F:sulfurtransferase activity"/>
    <property type="evidence" value="ECO:0007669"/>
    <property type="project" value="InterPro"/>
</dbReference>
<dbReference type="GO" id="GO:0006777">
    <property type="term" value="P:Mo-molybdopterin cofactor biosynthetic process"/>
    <property type="evidence" value="ECO:0007669"/>
    <property type="project" value="UniProtKB-UniRule"/>
</dbReference>
<dbReference type="Gene3D" id="3.10.20.10">
    <property type="match status" value="1"/>
</dbReference>
<dbReference type="Gene3D" id="3.40.140.10">
    <property type="entry name" value="Cytidine Deaminase, domain 2"/>
    <property type="match status" value="1"/>
</dbReference>
<dbReference type="HAMAP" id="MF_00187">
    <property type="entry name" value="FdhD"/>
    <property type="match status" value="1"/>
</dbReference>
<dbReference type="InterPro" id="IPR016193">
    <property type="entry name" value="Cytidine_deaminase-like"/>
</dbReference>
<dbReference type="InterPro" id="IPR003786">
    <property type="entry name" value="FdhD"/>
</dbReference>
<dbReference type="NCBIfam" id="TIGR00129">
    <property type="entry name" value="fdhD_narQ"/>
    <property type="match status" value="1"/>
</dbReference>
<dbReference type="PANTHER" id="PTHR30592">
    <property type="entry name" value="FORMATE DEHYDROGENASE"/>
    <property type="match status" value="1"/>
</dbReference>
<dbReference type="PANTHER" id="PTHR30592:SF1">
    <property type="entry name" value="SULFUR CARRIER PROTEIN FDHD"/>
    <property type="match status" value="1"/>
</dbReference>
<dbReference type="Pfam" id="PF02634">
    <property type="entry name" value="FdhD-NarQ"/>
    <property type="match status" value="1"/>
</dbReference>
<dbReference type="PIRSF" id="PIRSF015626">
    <property type="entry name" value="FdhD"/>
    <property type="match status" value="1"/>
</dbReference>
<dbReference type="SUPFAM" id="SSF53927">
    <property type="entry name" value="Cytidine deaminase-like"/>
    <property type="match status" value="1"/>
</dbReference>
<protein>
    <recommendedName>
        <fullName evidence="1">Sulfur carrier protein FdhD</fullName>
    </recommendedName>
</protein>
<keyword id="KW-0963">Cytoplasm</keyword>
<keyword id="KW-0501">Molybdenum cofactor biosynthesis</keyword>
<comment type="function">
    <text evidence="1">Required for formate dehydrogenase (FDH) activity. Acts as a sulfur carrier protein that transfers sulfur from IscS to the molybdenum cofactor prior to its insertion into FDH.</text>
</comment>
<comment type="subcellular location">
    <subcellularLocation>
        <location evidence="1">Cytoplasm</location>
    </subcellularLocation>
</comment>
<comment type="similarity">
    <text evidence="1">Belongs to the FdhD family.</text>
</comment>